<organism>
    <name type="scientific">Nicotiana tomentosiformis</name>
    <name type="common">Tobacco</name>
    <dbReference type="NCBI Taxonomy" id="4098"/>
    <lineage>
        <taxon>Eukaryota</taxon>
        <taxon>Viridiplantae</taxon>
        <taxon>Streptophyta</taxon>
        <taxon>Embryophyta</taxon>
        <taxon>Tracheophyta</taxon>
        <taxon>Spermatophyta</taxon>
        <taxon>Magnoliopsida</taxon>
        <taxon>eudicotyledons</taxon>
        <taxon>Gunneridae</taxon>
        <taxon>Pentapetalae</taxon>
        <taxon>asterids</taxon>
        <taxon>lamiids</taxon>
        <taxon>Solanales</taxon>
        <taxon>Solanaceae</taxon>
        <taxon>Nicotianoideae</taxon>
        <taxon>Nicotianeae</taxon>
        <taxon>Nicotiana</taxon>
    </lineage>
</organism>
<proteinExistence type="inferred from homology"/>
<name>RPOB_NICTO</name>
<keyword id="KW-0150">Chloroplast</keyword>
<keyword id="KW-0240">DNA-directed RNA polymerase</keyword>
<keyword id="KW-0548">Nucleotidyltransferase</keyword>
<keyword id="KW-0934">Plastid</keyword>
<keyword id="KW-0804">Transcription</keyword>
<keyword id="KW-0808">Transferase</keyword>
<feature type="chain" id="PRO_0000224130" description="DNA-directed RNA polymerase subunit beta">
    <location>
        <begin position="1"/>
        <end position="1070"/>
    </location>
</feature>
<comment type="function">
    <text evidence="1">DNA-dependent RNA polymerase catalyzes the transcription of DNA into RNA using the four ribonucleoside triphosphates as substrates.</text>
</comment>
<comment type="catalytic activity">
    <reaction evidence="1">
        <text>RNA(n) + a ribonucleoside 5'-triphosphate = RNA(n+1) + diphosphate</text>
        <dbReference type="Rhea" id="RHEA:21248"/>
        <dbReference type="Rhea" id="RHEA-COMP:14527"/>
        <dbReference type="Rhea" id="RHEA-COMP:17342"/>
        <dbReference type="ChEBI" id="CHEBI:33019"/>
        <dbReference type="ChEBI" id="CHEBI:61557"/>
        <dbReference type="ChEBI" id="CHEBI:140395"/>
        <dbReference type="EC" id="2.7.7.6"/>
    </reaction>
</comment>
<comment type="subunit">
    <text evidence="1">In plastids the minimal PEP RNA polymerase catalytic core is composed of four subunits: alpha, beta, beta', and beta''. When a (nuclear-encoded) sigma factor is associated with the core the holoenzyme is formed, which can initiate transcription.</text>
</comment>
<comment type="subcellular location">
    <subcellularLocation>
        <location>Plastid</location>
        <location>Chloroplast</location>
    </subcellularLocation>
</comment>
<comment type="similarity">
    <text evidence="1">Belongs to the RNA polymerase beta chain family.</text>
</comment>
<reference key="1">
    <citation type="journal article" date="2006" name="Mol. Genet. Genomics">
        <title>The chloroplast genome of Nicotiana sylvestris and Nicotiana tomentosiformis: complete sequencing confirms that the Nicotiana sylvestris progenitor is the maternal genome donor of Nicotiana tabacum.</title>
        <authorList>
            <person name="Yukawa M."/>
            <person name="Tsudzuki T."/>
            <person name="Sugiura M."/>
        </authorList>
    </citation>
    <scope>NUCLEOTIDE SEQUENCE [LARGE SCALE GENOMIC DNA]</scope>
</reference>
<evidence type="ECO:0000255" key="1">
    <source>
        <dbReference type="HAMAP-Rule" id="MF_01321"/>
    </source>
</evidence>
<dbReference type="EC" id="2.7.7.6" evidence="1"/>
<dbReference type="EMBL" id="AB240139">
    <property type="protein sequence ID" value="BAE47989.1"/>
    <property type="molecule type" value="Genomic_DNA"/>
</dbReference>
<dbReference type="RefSeq" id="YP_398851.1">
    <property type="nucleotide sequence ID" value="NC_007602.1"/>
</dbReference>
<dbReference type="SMR" id="Q33C46"/>
<dbReference type="GeneID" id="3776378"/>
<dbReference type="KEGG" id="nto:3776378"/>
<dbReference type="OrthoDB" id="1678757at2759"/>
<dbReference type="GO" id="GO:0009507">
    <property type="term" value="C:chloroplast"/>
    <property type="evidence" value="ECO:0007669"/>
    <property type="project" value="UniProtKB-SubCell"/>
</dbReference>
<dbReference type="GO" id="GO:0000428">
    <property type="term" value="C:DNA-directed RNA polymerase complex"/>
    <property type="evidence" value="ECO:0007669"/>
    <property type="project" value="UniProtKB-KW"/>
</dbReference>
<dbReference type="GO" id="GO:0005739">
    <property type="term" value="C:mitochondrion"/>
    <property type="evidence" value="ECO:0007669"/>
    <property type="project" value="GOC"/>
</dbReference>
<dbReference type="GO" id="GO:0003677">
    <property type="term" value="F:DNA binding"/>
    <property type="evidence" value="ECO:0007669"/>
    <property type="project" value="UniProtKB-UniRule"/>
</dbReference>
<dbReference type="GO" id="GO:0003899">
    <property type="term" value="F:DNA-directed RNA polymerase activity"/>
    <property type="evidence" value="ECO:0007669"/>
    <property type="project" value="UniProtKB-UniRule"/>
</dbReference>
<dbReference type="GO" id="GO:0032549">
    <property type="term" value="F:ribonucleoside binding"/>
    <property type="evidence" value="ECO:0007669"/>
    <property type="project" value="InterPro"/>
</dbReference>
<dbReference type="GO" id="GO:0006351">
    <property type="term" value="P:DNA-templated transcription"/>
    <property type="evidence" value="ECO:0007669"/>
    <property type="project" value="UniProtKB-UniRule"/>
</dbReference>
<dbReference type="CDD" id="cd00653">
    <property type="entry name" value="RNA_pol_B_RPB2"/>
    <property type="match status" value="1"/>
</dbReference>
<dbReference type="FunFam" id="3.90.1110.10:FF:000009">
    <property type="entry name" value="DNA-directed RNA polymerase subunit beta"/>
    <property type="match status" value="1"/>
</dbReference>
<dbReference type="Gene3D" id="2.40.50.100">
    <property type="match status" value="1"/>
</dbReference>
<dbReference type="Gene3D" id="2.40.50.150">
    <property type="match status" value="1"/>
</dbReference>
<dbReference type="Gene3D" id="3.90.1100.10">
    <property type="match status" value="1"/>
</dbReference>
<dbReference type="Gene3D" id="2.30.150.10">
    <property type="entry name" value="DNA-directed RNA polymerase, beta subunit, external 1 domain"/>
    <property type="match status" value="1"/>
</dbReference>
<dbReference type="Gene3D" id="2.40.270.10">
    <property type="entry name" value="DNA-directed RNA polymerase, subunit 2, domain 6"/>
    <property type="match status" value="2"/>
</dbReference>
<dbReference type="Gene3D" id="3.90.1800.10">
    <property type="entry name" value="RNA polymerase alpha subunit dimerisation domain"/>
    <property type="match status" value="1"/>
</dbReference>
<dbReference type="Gene3D" id="3.90.1110.10">
    <property type="entry name" value="RNA polymerase Rpb2, domain 2"/>
    <property type="match status" value="1"/>
</dbReference>
<dbReference type="HAMAP" id="MF_01321">
    <property type="entry name" value="RNApol_bact_RpoB"/>
    <property type="match status" value="1"/>
</dbReference>
<dbReference type="InterPro" id="IPR042107">
    <property type="entry name" value="DNA-dir_RNA_pol_bsu_ext_1_sf"/>
</dbReference>
<dbReference type="InterPro" id="IPR015712">
    <property type="entry name" value="DNA-dir_RNA_pol_su2"/>
</dbReference>
<dbReference type="InterPro" id="IPR007120">
    <property type="entry name" value="DNA-dir_RNAP_su2_dom"/>
</dbReference>
<dbReference type="InterPro" id="IPR037033">
    <property type="entry name" value="DNA-dir_RNAP_su2_hyb_sf"/>
</dbReference>
<dbReference type="InterPro" id="IPR010243">
    <property type="entry name" value="RNA_pol_bsu_bac"/>
</dbReference>
<dbReference type="InterPro" id="IPR007121">
    <property type="entry name" value="RNA_pol_bsu_CS"/>
</dbReference>
<dbReference type="InterPro" id="IPR007642">
    <property type="entry name" value="RNA_pol_Rpb2_2"/>
</dbReference>
<dbReference type="InterPro" id="IPR037034">
    <property type="entry name" value="RNA_pol_Rpb2_2_sf"/>
</dbReference>
<dbReference type="InterPro" id="IPR007645">
    <property type="entry name" value="RNA_pol_Rpb2_3"/>
</dbReference>
<dbReference type="InterPro" id="IPR007641">
    <property type="entry name" value="RNA_pol_Rpb2_7"/>
</dbReference>
<dbReference type="InterPro" id="IPR014724">
    <property type="entry name" value="RNA_pol_RPB2_OB-fold"/>
</dbReference>
<dbReference type="NCBIfam" id="NF001616">
    <property type="entry name" value="PRK00405.1"/>
    <property type="match status" value="1"/>
</dbReference>
<dbReference type="PANTHER" id="PTHR20856">
    <property type="entry name" value="DNA-DIRECTED RNA POLYMERASE I SUBUNIT 2"/>
    <property type="match status" value="1"/>
</dbReference>
<dbReference type="Pfam" id="PF04561">
    <property type="entry name" value="RNA_pol_Rpb2_2"/>
    <property type="match status" value="1"/>
</dbReference>
<dbReference type="Pfam" id="PF04565">
    <property type="entry name" value="RNA_pol_Rpb2_3"/>
    <property type="match status" value="1"/>
</dbReference>
<dbReference type="Pfam" id="PF00562">
    <property type="entry name" value="RNA_pol_Rpb2_6"/>
    <property type="match status" value="1"/>
</dbReference>
<dbReference type="Pfam" id="PF04560">
    <property type="entry name" value="RNA_pol_Rpb2_7"/>
    <property type="match status" value="1"/>
</dbReference>
<dbReference type="SUPFAM" id="SSF64484">
    <property type="entry name" value="beta and beta-prime subunits of DNA dependent RNA-polymerase"/>
    <property type="match status" value="1"/>
</dbReference>
<dbReference type="PROSITE" id="PS01166">
    <property type="entry name" value="RNA_POL_BETA"/>
    <property type="match status" value="1"/>
</dbReference>
<accession>Q33C46</accession>
<gene>
    <name evidence="1" type="primary">rpoB</name>
</gene>
<sequence length="1070" mass="120597">MLGDGNEGISTIPGFNQIQFEGFCRFIDQGLTEELYKFPKIEDTDQEIEFQLFVETYQLVEPLIKERDAVYESLTYSSELYVSAGLIWKNSRDMQEQTFFIGNIPLMNSLGTSIVNGIYRIVINQILQSPGIYYRSELDHNGISVYTGTIISDWGGRSELEIDRKARIWARVSRKQKISILVLSSAMGLNLREILENVCYPEIFLSFLSDKERKKIGSKENAILEFYQQFACVGGDPVFSESLCKELQKKFFQQRCELGRIGRRNMNRRLNLDIPQNNTFLLPRDILAAADHLIGLKFGMGALDDMNHLKNKRIRSVADLLQDQFGLALVRLENVVRGTICGAIRHKLIPTPQNLVTSTPLTTTYESFFGLHPLSQVLDRTNPLTQIVHGRKLSYLGPGGLTGRTASFRIRDIHPSHYGRICPIDTSEGINVGLIGSLAIHAKIGHWGSLESPFYEISERSTGVRMLYLSPGRDEYYMVAAGNSLALNRDIQEEQVVPARYRQEFLTIAWEQVHLRSIFPFQYFSIGASLIPFIEHNDANRALMSSNMQRQAVPLSRSEKCIVGTGLERQAALDSGALAIAEREGRVVYTNTDKILLAGNGDILSIPLVIYQRSNKNTCMHQKLQVPRGKCIKKGQILADGAATVGGELALGKNVLVAYMPWEGYNSEDAVLISERLVYEDIYTSFHIRKYEIQTHVTSQGPEKVTNEIPHLEAHLLRNLDKNGIVMLGSWVETGDILVGKLTPQVVKESSYAPEDRLLRAILGIQVSTSKETCLKLLIGGRGRVIDVRWIQKRGGSSYNPETIRVYILQKREIKVGDKVAGRHGNKGIISKILPRQDMPYLQDGRSVDMVFNPLGVPSRMNVGQIFECSLGLAGSLLDRHYRIAPFDERYEQEASRKLVFSELYEASKQTANPWVFEPEYPGKSRIFDGRTGNPFEQPVIIGKPYILKLIHQVDDKIHGRSSGHYALVTQQPLRGRAKQGGQRVGEMEVWALEGFGVAHILQEMLTYKSDHIRARQEVLGTTIIGGTIPNPEDAPESFRLLVRELRSLALELNHFLVSEKNFQINRKEA</sequence>
<protein>
    <recommendedName>
        <fullName evidence="1">DNA-directed RNA polymerase subunit beta</fullName>
        <ecNumber evidence="1">2.7.7.6</ecNumber>
    </recommendedName>
    <alternativeName>
        <fullName evidence="1">PEP</fullName>
    </alternativeName>
    <alternativeName>
        <fullName evidence="1">Plastid-encoded RNA polymerase subunit beta</fullName>
        <shortName evidence="1">RNA polymerase subunit beta</shortName>
    </alternativeName>
</protein>
<geneLocation type="chloroplast"/>